<proteinExistence type="inferred from homology"/>
<evidence type="ECO:0000250" key="1">
    <source>
        <dbReference type="UniProtKB" id="P09339"/>
    </source>
</evidence>
<evidence type="ECO:0000250" key="2">
    <source>
        <dbReference type="UniProtKB" id="P36683"/>
    </source>
</evidence>
<evidence type="ECO:0000250" key="3">
    <source>
        <dbReference type="UniProtKB" id="Q8ZP52"/>
    </source>
</evidence>
<evidence type="ECO:0000305" key="4"/>
<organism>
    <name type="scientific">Rickettsia prowazekii (strain Madrid E)</name>
    <dbReference type="NCBI Taxonomy" id="272947"/>
    <lineage>
        <taxon>Bacteria</taxon>
        <taxon>Pseudomonadati</taxon>
        <taxon>Pseudomonadota</taxon>
        <taxon>Alphaproteobacteria</taxon>
        <taxon>Rickettsiales</taxon>
        <taxon>Rickettsiaceae</taxon>
        <taxon>Rickettsieae</taxon>
        <taxon>Rickettsia</taxon>
        <taxon>typhus group</taxon>
    </lineage>
</organism>
<feature type="chain" id="PRO_0000076665" description="Aconitate hydratase A">
    <location>
        <begin position="1"/>
        <end position="878"/>
    </location>
</feature>
<feature type="binding site" evidence="2">
    <location>
        <position position="426"/>
    </location>
    <ligand>
        <name>[4Fe-4S] cluster</name>
        <dbReference type="ChEBI" id="CHEBI:49883"/>
    </ligand>
</feature>
<feature type="binding site" evidence="2">
    <location>
        <position position="492"/>
    </location>
    <ligand>
        <name>[4Fe-4S] cluster</name>
        <dbReference type="ChEBI" id="CHEBI:49883"/>
    </ligand>
</feature>
<feature type="binding site" evidence="2">
    <location>
        <position position="495"/>
    </location>
    <ligand>
        <name>[4Fe-4S] cluster</name>
        <dbReference type="ChEBI" id="CHEBI:49883"/>
    </ligand>
</feature>
<protein>
    <recommendedName>
        <fullName evidence="3">Aconitate hydratase A</fullName>
        <shortName evidence="3">ACN</shortName>
        <shortName evidence="3">Aconitase</shortName>
        <ecNumber evidence="3">4.2.1.3</ecNumber>
    </recommendedName>
    <alternativeName>
        <fullName evidence="3">(2R,3S)-2-methylisocitrate dehydratase</fullName>
    </alternativeName>
    <alternativeName>
        <fullName evidence="3">(2S,3R)-3-hydroxybutane-1,2,3-tricarboxylate dehydratase</fullName>
    </alternativeName>
    <alternativeName>
        <fullName evidence="1">Iron-responsive protein-like</fullName>
        <shortName evidence="1">IRP-like</shortName>
    </alternativeName>
    <alternativeName>
        <fullName evidence="3">Probable 2-methyl-cis-aconitate hydratase</fullName>
        <ecNumber evidence="3">4.2.1.99</ecNumber>
    </alternativeName>
    <alternativeName>
        <fullName evidence="1">RNA-binding protein</fullName>
    </alternativeName>
</protein>
<sequence length="878" mass="97120">MSKVHNSEYIKELVVDNTSYKIYDINKAASDIGLPLKKLPYSLRVLLENVLRTNGNKENLLVFKEWLKTKKSNTEIDFMPARVLMQDFTGVPAIVDLAAMRDAMQKIGCNPLKINPLIPVDLVIDHSVSVDSYGNKESFDQNVHMEMKRNIERYQFLKWGQQAFNNFKVVPPGTGICHQVNLEFLSQVVWHNDGTAYPDSLVGTDSHTTMVNGLSVLGWGVGGIEAESAMLGQPITMIIPEVIGVKLIGKLAGMATATDLVLTITEILRRKKVVGKFVEFFGNGLRNLTISDRATISNMSPEYGATCGFFPIDQETLKYLEVTGREITQIKLVEKYAIEQNLWYNCEDTQEYTEVLELDLSTVYSSLAGPKRPQDRVNLNCVASNFQNELPYFALANKDIDKKYAVANQNYAIGNGDVVIAAITSCTNTSNPSVMIGAALLAKKALEHGLNVKPWVKTSLAPGSKVVTEYLKLSGLDKYLDALGFNLVGYGCTTCIGNSGSLNPEIENTINKNRLVVASVLSGNRNFEGRINPLTKASYLASPILVVAYALSGTLNIDLTNTPIGANIYLKDIWPSQKEIDEVIANSINSSMFIEKYADVFNGTKEWRDLQITTGTNYNWDKNSTYINNPPYFDNIGSEHSIKDIKSARILAIFGDSITTDHISPAGSISKNSPAAKYLIKHHIEPLDFNSYGSRRGNHEVMMRGTFANIRIKNEMCNGVEGGFTINQLSGVQQTIYDTAMDYKAHDIPLVIFAGKEYGSGSSRDWAAKGPGLLGIKAVIAESFERIHRSNLVGMGILPLTFTGKNTRLNLKLDGSEIIDLIGLSENIKPYNLVKCVIKKQTNEISTIDLILQIFTENEINYIKHGSIMQFVVESLKG</sequence>
<gene>
    <name type="primary">acnA</name>
    <name type="ordered locus">RP799</name>
</gene>
<accession>Q9ZCF4</accession>
<name>ACNA_RICPR</name>
<reference key="1">
    <citation type="journal article" date="1998" name="Nature">
        <title>The genome sequence of Rickettsia prowazekii and the origin of mitochondria.</title>
        <authorList>
            <person name="Andersson S.G.E."/>
            <person name="Zomorodipour A."/>
            <person name="Andersson J.O."/>
            <person name="Sicheritz-Ponten T."/>
            <person name="Alsmark U.C.M."/>
            <person name="Podowski R.M."/>
            <person name="Naeslund A.K."/>
            <person name="Eriksson A.-S."/>
            <person name="Winkler H.H."/>
            <person name="Kurland C.G."/>
        </authorList>
    </citation>
    <scope>NUCLEOTIDE SEQUENCE [LARGE SCALE GENOMIC DNA]</scope>
    <source>
        <strain>Madrid E</strain>
    </source>
</reference>
<comment type="function">
    <text evidence="1 3">Involved in the catabolism of short chain fatty acids (SCFA) via the tricarboxylic acid (TCA)(acetyl degradation route) and probably the 2-methylcitrate cycle I (propionate degradation route). Catalyzes the reversible isomerization of citrate to isocitrate via cis-aconitate. Could catalyze the hydration of 2-methyl-cis-aconitate to yield (2R,3S)-2-methylisocitrate. The apo form of AcnA functions as a RNA-binding regulatory protein.</text>
</comment>
<comment type="catalytic activity">
    <reaction evidence="3">
        <text>citrate = D-threo-isocitrate</text>
        <dbReference type="Rhea" id="RHEA:10336"/>
        <dbReference type="ChEBI" id="CHEBI:15562"/>
        <dbReference type="ChEBI" id="CHEBI:16947"/>
        <dbReference type="EC" id="4.2.1.3"/>
    </reaction>
</comment>
<comment type="catalytic activity">
    <reaction evidence="3">
        <text>(2S,3R)-3-hydroxybutane-1,2,3-tricarboxylate = 2-methyl-cis-aconitate + H2O</text>
        <dbReference type="Rhea" id="RHEA:17941"/>
        <dbReference type="ChEBI" id="CHEBI:15377"/>
        <dbReference type="ChEBI" id="CHEBI:57429"/>
        <dbReference type="ChEBI" id="CHEBI:57872"/>
        <dbReference type="EC" id="4.2.1.99"/>
    </reaction>
</comment>
<comment type="cofactor">
    <cofactor evidence="1">
        <name>[4Fe-4S] cluster</name>
        <dbReference type="ChEBI" id="CHEBI:49883"/>
    </cofactor>
    <text evidence="1">Binds 1 [4Fe-4S] cluster per subunit.</text>
</comment>
<comment type="pathway">
    <text evidence="3">Carbohydrate metabolism; tricarboxylic acid cycle; isocitrate from oxaloacetate: step 2/2.</text>
</comment>
<comment type="pathway">
    <text evidence="3">Organic acid metabolism; propanoate degradation.</text>
</comment>
<comment type="subunit">
    <text evidence="1">Monomer.</text>
</comment>
<comment type="similarity">
    <text evidence="4">Belongs to the aconitase/IPM isomerase family.</text>
</comment>
<dbReference type="EC" id="4.2.1.3" evidence="3"/>
<dbReference type="EC" id="4.2.1.99" evidence="3"/>
<dbReference type="EMBL" id="AJ235273">
    <property type="protein sequence ID" value="CAA15225.1"/>
    <property type="molecule type" value="Genomic_DNA"/>
</dbReference>
<dbReference type="PIR" id="A71641">
    <property type="entry name" value="A71641"/>
</dbReference>
<dbReference type="RefSeq" id="NP_221149.1">
    <property type="nucleotide sequence ID" value="NC_000963.1"/>
</dbReference>
<dbReference type="RefSeq" id="WP_004596907.1">
    <property type="nucleotide sequence ID" value="NC_000963.1"/>
</dbReference>
<dbReference type="SMR" id="Q9ZCF4"/>
<dbReference type="STRING" id="272947.gene:17555868"/>
<dbReference type="EnsemblBacteria" id="CAA15225">
    <property type="protein sequence ID" value="CAA15225"/>
    <property type="gene ID" value="CAA15225"/>
</dbReference>
<dbReference type="GeneID" id="57569921"/>
<dbReference type="KEGG" id="rpr:RP799"/>
<dbReference type="PATRIC" id="fig|272947.5.peg.835"/>
<dbReference type="eggNOG" id="COG1048">
    <property type="taxonomic scope" value="Bacteria"/>
</dbReference>
<dbReference type="HOGENOM" id="CLU_013476_2_1_5"/>
<dbReference type="OrthoDB" id="9764318at2"/>
<dbReference type="UniPathway" id="UPA00223">
    <property type="reaction ID" value="UER00718"/>
</dbReference>
<dbReference type="UniPathway" id="UPA00946"/>
<dbReference type="Proteomes" id="UP000002480">
    <property type="component" value="Chromosome"/>
</dbReference>
<dbReference type="GO" id="GO:0047456">
    <property type="term" value="F:2-methylisocitrate dehydratase activity"/>
    <property type="evidence" value="ECO:0000250"/>
    <property type="project" value="UniProtKB"/>
</dbReference>
<dbReference type="GO" id="GO:0051539">
    <property type="term" value="F:4 iron, 4 sulfur cluster binding"/>
    <property type="evidence" value="ECO:0000250"/>
    <property type="project" value="UniProtKB"/>
</dbReference>
<dbReference type="GO" id="GO:0003994">
    <property type="term" value="F:aconitate hydratase activity"/>
    <property type="evidence" value="ECO:0000250"/>
    <property type="project" value="UniProtKB"/>
</dbReference>
<dbReference type="GO" id="GO:0046872">
    <property type="term" value="F:metal ion binding"/>
    <property type="evidence" value="ECO:0007669"/>
    <property type="project" value="UniProtKB-KW"/>
</dbReference>
<dbReference type="GO" id="GO:0003730">
    <property type="term" value="F:mRNA 3'-UTR binding"/>
    <property type="evidence" value="ECO:0000250"/>
    <property type="project" value="UniProtKB"/>
</dbReference>
<dbReference type="GO" id="GO:0003729">
    <property type="term" value="F:mRNA binding"/>
    <property type="evidence" value="ECO:0000250"/>
    <property type="project" value="UniProtKB"/>
</dbReference>
<dbReference type="GO" id="GO:0019679">
    <property type="term" value="P:propionate metabolic process, methylcitrate cycle"/>
    <property type="evidence" value="ECO:0000250"/>
    <property type="project" value="UniProtKB"/>
</dbReference>
<dbReference type="GO" id="GO:0006099">
    <property type="term" value="P:tricarboxylic acid cycle"/>
    <property type="evidence" value="ECO:0000250"/>
    <property type="project" value="UniProtKB"/>
</dbReference>
<dbReference type="CDD" id="cd01586">
    <property type="entry name" value="AcnA_IRP"/>
    <property type="match status" value="1"/>
</dbReference>
<dbReference type="CDD" id="cd01580">
    <property type="entry name" value="AcnA_IRP_Swivel"/>
    <property type="match status" value="1"/>
</dbReference>
<dbReference type="FunFam" id="3.20.19.10:FF:000001">
    <property type="entry name" value="Aconitate hydratase"/>
    <property type="match status" value="1"/>
</dbReference>
<dbReference type="FunFam" id="3.30.499.10:FF:000002">
    <property type="entry name" value="Aconitate hydratase"/>
    <property type="match status" value="1"/>
</dbReference>
<dbReference type="FunFam" id="3.30.499.10:FF:000020">
    <property type="entry name" value="Aconitate hydratase A"/>
    <property type="match status" value="1"/>
</dbReference>
<dbReference type="Gene3D" id="6.10.190.10">
    <property type="match status" value="1"/>
</dbReference>
<dbReference type="Gene3D" id="3.30.499.10">
    <property type="entry name" value="Aconitase, domain 3"/>
    <property type="match status" value="2"/>
</dbReference>
<dbReference type="Gene3D" id="3.20.19.10">
    <property type="entry name" value="Aconitase, domain 4"/>
    <property type="match status" value="1"/>
</dbReference>
<dbReference type="InterPro" id="IPR044137">
    <property type="entry name" value="AcnA_IRP_Swivel"/>
</dbReference>
<dbReference type="InterPro" id="IPR015931">
    <property type="entry name" value="Acnase/IPM_dHydase_lsu_aba_1/3"/>
</dbReference>
<dbReference type="InterPro" id="IPR001030">
    <property type="entry name" value="Acoase/IPM_deHydtase_lsu_aba"/>
</dbReference>
<dbReference type="InterPro" id="IPR015928">
    <property type="entry name" value="Aconitase/3IPM_dehydase_swvl"/>
</dbReference>
<dbReference type="InterPro" id="IPR006249">
    <property type="entry name" value="Aconitase/IRP2"/>
</dbReference>
<dbReference type="InterPro" id="IPR018136">
    <property type="entry name" value="Aconitase_4Fe-4S_BS"/>
</dbReference>
<dbReference type="InterPro" id="IPR036008">
    <property type="entry name" value="Aconitase_4Fe-4S_dom"/>
</dbReference>
<dbReference type="InterPro" id="IPR000573">
    <property type="entry name" value="AconitaseA/IPMdHydase_ssu_swvl"/>
</dbReference>
<dbReference type="NCBIfam" id="TIGR01341">
    <property type="entry name" value="aconitase_1"/>
    <property type="match status" value="1"/>
</dbReference>
<dbReference type="NCBIfam" id="NF006757">
    <property type="entry name" value="PRK09277.1"/>
    <property type="match status" value="1"/>
</dbReference>
<dbReference type="NCBIfam" id="NF009520">
    <property type="entry name" value="PRK12881.1"/>
    <property type="match status" value="1"/>
</dbReference>
<dbReference type="PANTHER" id="PTHR11670">
    <property type="entry name" value="ACONITASE/IRON-RESPONSIVE ELEMENT FAMILY MEMBER"/>
    <property type="match status" value="1"/>
</dbReference>
<dbReference type="Pfam" id="PF00330">
    <property type="entry name" value="Aconitase"/>
    <property type="match status" value="1"/>
</dbReference>
<dbReference type="Pfam" id="PF00694">
    <property type="entry name" value="Aconitase_C"/>
    <property type="match status" value="1"/>
</dbReference>
<dbReference type="PRINTS" id="PR00415">
    <property type="entry name" value="ACONITASE"/>
</dbReference>
<dbReference type="SUPFAM" id="SSF53732">
    <property type="entry name" value="Aconitase iron-sulfur domain"/>
    <property type="match status" value="1"/>
</dbReference>
<dbReference type="SUPFAM" id="SSF52016">
    <property type="entry name" value="LeuD/IlvD-like"/>
    <property type="match status" value="1"/>
</dbReference>
<dbReference type="PROSITE" id="PS00450">
    <property type="entry name" value="ACONITASE_1"/>
    <property type="match status" value="1"/>
</dbReference>
<dbReference type="PROSITE" id="PS01244">
    <property type="entry name" value="ACONITASE_2"/>
    <property type="match status" value="1"/>
</dbReference>
<keyword id="KW-0004">4Fe-4S</keyword>
<keyword id="KW-0408">Iron</keyword>
<keyword id="KW-0411">Iron-sulfur</keyword>
<keyword id="KW-0456">Lyase</keyword>
<keyword id="KW-0479">Metal-binding</keyword>
<keyword id="KW-1185">Reference proteome</keyword>
<keyword id="KW-0694">RNA-binding</keyword>
<keyword id="KW-0816">Tricarboxylic acid cycle</keyword>